<keyword id="KW-0249">Electron transport</keyword>
<keyword id="KW-0349">Heme</keyword>
<keyword id="KW-0408">Iron</keyword>
<keyword id="KW-0472">Membrane</keyword>
<keyword id="KW-0479">Metal-binding</keyword>
<keyword id="KW-0496">Mitochondrion</keyword>
<keyword id="KW-0999">Mitochondrion inner membrane</keyword>
<keyword id="KW-0679">Respiratory chain</keyword>
<keyword id="KW-0812">Transmembrane</keyword>
<keyword id="KW-1133">Transmembrane helix</keyword>
<keyword id="KW-0813">Transport</keyword>
<keyword id="KW-0830">Ubiquinone</keyword>
<sequence length="379" mass="42622">MTNIRKTHPLLKIINSSFVDLPAPSSLSSWWNFGSLLGVCLAVQILTGLFLAMHYTSDTATAFNSVTHICRDVNYGWLLRYLHANGASMFFICLYLHVGRGLYYGSYTYSETWNVGILLLFAVMATAFMGYVLPWGQMYFWGATVITNLLSAIPYIGTDLVQWIWGGFSVDKATLTRFFAFHFLLPFIVAALVMVHLLFLHETGSNNPTGIPSDPDMIPFHPYYTIKDILGFLIMLTALSALVLSSPDLLGDPDNYIPANPLNTPPHIKPEWYFLFAYAILRSIPNKLGGVLALVMSILILAIVPILHMSKQRSMMFRPLSQCLFWLLVAVLFTLTWIGGQPVEHPYIIIGQTASVLYFLIILVLMPATSIMENYLLKW</sequence>
<reference key="1">
    <citation type="journal article" date="2006" name="Mol. Phylogenet. Evol.">
        <title>Molecular systematics of Vampyressine bats (Phyllostomidae: Stenodermatinae) with comparison of direct and indirect surveys of mitochondrial DNA variation.</title>
        <authorList>
            <person name="Hoofer S.R."/>
            <person name="Baker R.J."/>
        </authorList>
    </citation>
    <scope>NUCLEOTIDE SEQUENCE [GENOMIC DNA]</scope>
</reference>
<name>CYB_CHIVL</name>
<comment type="function">
    <text evidence="2">Component of the ubiquinol-cytochrome c reductase complex (complex III or cytochrome b-c1 complex) that is part of the mitochondrial respiratory chain. The b-c1 complex mediates electron transfer from ubiquinol to cytochrome c. Contributes to the generation of a proton gradient across the mitochondrial membrane that is then used for ATP synthesis.</text>
</comment>
<comment type="cofactor">
    <cofactor evidence="2">
        <name>heme b</name>
        <dbReference type="ChEBI" id="CHEBI:60344"/>
    </cofactor>
    <text evidence="2">Binds 2 heme b groups non-covalently.</text>
</comment>
<comment type="subunit">
    <text evidence="2">The cytochrome bc1 complex contains 11 subunits: 3 respiratory subunits (MT-CYB, CYC1 and UQCRFS1), 2 core proteins (UQCRC1 and UQCRC2) and 6 low-molecular weight proteins (UQCRH/QCR6, UQCRB/QCR7, UQCRQ/QCR8, UQCR10/QCR9, UQCR11/QCR10 and a cleavage product of UQCRFS1). This cytochrome bc1 complex then forms a dimer.</text>
</comment>
<comment type="subcellular location">
    <subcellularLocation>
        <location evidence="2">Mitochondrion inner membrane</location>
        <topology evidence="2">Multi-pass membrane protein</topology>
    </subcellularLocation>
</comment>
<comment type="miscellaneous">
    <text evidence="1">Heme 1 (or BL or b562) is low-potential and absorbs at about 562 nm, and heme 2 (or BH or b566) is high-potential and absorbs at about 566 nm.</text>
</comment>
<comment type="similarity">
    <text evidence="3 4">Belongs to the cytochrome b family.</text>
</comment>
<comment type="caution">
    <text evidence="2">The full-length protein contains only eight transmembrane helices, not nine as predicted by bioinformatics tools.</text>
</comment>
<geneLocation type="mitochondrion"/>
<feature type="chain" id="PRO_0000257883" description="Cytochrome b">
    <location>
        <begin position="1"/>
        <end position="379"/>
    </location>
</feature>
<feature type="transmembrane region" description="Helical" evidence="2">
    <location>
        <begin position="33"/>
        <end position="53"/>
    </location>
</feature>
<feature type="transmembrane region" description="Helical" evidence="2">
    <location>
        <begin position="77"/>
        <end position="98"/>
    </location>
</feature>
<feature type="transmembrane region" description="Helical" evidence="2">
    <location>
        <begin position="113"/>
        <end position="133"/>
    </location>
</feature>
<feature type="transmembrane region" description="Helical" evidence="2">
    <location>
        <begin position="178"/>
        <end position="198"/>
    </location>
</feature>
<feature type="transmembrane region" description="Helical" evidence="2">
    <location>
        <begin position="226"/>
        <end position="246"/>
    </location>
</feature>
<feature type="transmembrane region" description="Helical" evidence="2">
    <location>
        <begin position="288"/>
        <end position="308"/>
    </location>
</feature>
<feature type="transmembrane region" description="Helical" evidence="2">
    <location>
        <begin position="320"/>
        <end position="340"/>
    </location>
</feature>
<feature type="transmembrane region" description="Helical" evidence="2">
    <location>
        <begin position="347"/>
        <end position="367"/>
    </location>
</feature>
<feature type="binding site" description="axial binding residue" evidence="2">
    <location>
        <position position="83"/>
    </location>
    <ligand>
        <name>heme b</name>
        <dbReference type="ChEBI" id="CHEBI:60344"/>
        <label>b562</label>
    </ligand>
    <ligandPart>
        <name>Fe</name>
        <dbReference type="ChEBI" id="CHEBI:18248"/>
    </ligandPart>
</feature>
<feature type="binding site" description="axial binding residue" evidence="2">
    <location>
        <position position="97"/>
    </location>
    <ligand>
        <name>heme b</name>
        <dbReference type="ChEBI" id="CHEBI:60344"/>
        <label>b566</label>
    </ligand>
    <ligandPart>
        <name>Fe</name>
        <dbReference type="ChEBI" id="CHEBI:18248"/>
    </ligandPart>
</feature>
<feature type="binding site" description="axial binding residue" evidence="2">
    <location>
        <position position="182"/>
    </location>
    <ligand>
        <name>heme b</name>
        <dbReference type="ChEBI" id="CHEBI:60344"/>
        <label>b562</label>
    </ligand>
    <ligandPart>
        <name>Fe</name>
        <dbReference type="ChEBI" id="CHEBI:18248"/>
    </ligandPart>
</feature>
<feature type="binding site" description="axial binding residue" evidence="2">
    <location>
        <position position="196"/>
    </location>
    <ligand>
        <name>heme b</name>
        <dbReference type="ChEBI" id="CHEBI:60344"/>
        <label>b566</label>
    </ligand>
    <ligandPart>
        <name>Fe</name>
        <dbReference type="ChEBI" id="CHEBI:18248"/>
    </ligandPart>
</feature>
<feature type="binding site" evidence="2">
    <location>
        <position position="201"/>
    </location>
    <ligand>
        <name>a ubiquinone</name>
        <dbReference type="ChEBI" id="CHEBI:16389"/>
    </ligand>
</feature>
<gene>
    <name type="primary">MT-CYB</name>
    <name type="synonym">COB</name>
    <name type="synonym">CYTB</name>
    <name type="synonym">MTCYB</name>
</gene>
<evidence type="ECO:0000250" key="1"/>
<evidence type="ECO:0000250" key="2">
    <source>
        <dbReference type="UniProtKB" id="P00157"/>
    </source>
</evidence>
<evidence type="ECO:0000255" key="3">
    <source>
        <dbReference type="PROSITE-ProRule" id="PRU00967"/>
    </source>
</evidence>
<evidence type="ECO:0000255" key="4">
    <source>
        <dbReference type="PROSITE-ProRule" id="PRU00968"/>
    </source>
</evidence>
<protein>
    <recommendedName>
        <fullName>Cytochrome b</fullName>
    </recommendedName>
    <alternativeName>
        <fullName>Complex III subunit 3</fullName>
    </alternativeName>
    <alternativeName>
        <fullName>Complex III subunit III</fullName>
    </alternativeName>
    <alternativeName>
        <fullName>Cytochrome b-c1 complex subunit 3</fullName>
    </alternativeName>
    <alternativeName>
        <fullName>Ubiquinol-cytochrome-c reductase complex cytochrome b subunit</fullName>
    </alternativeName>
</protein>
<accession>Q1HUU1</accession>
<dbReference type="EMBL" id="DQ312414">
    <property type="protein sequence ID" value="ABC61903.1"/>
    <property type="molecule type" value="Genomic_DNA"/>
</dbReference>
<dbReference type="SMR" id="Q1HUU1"/>
<dbReference type="GO" id="GO:0005743">
    <property type="term" value="C:mitochondrial inner membrane"/>
    <property type="evidence" value="ECO:0007669"/>
    <property type="project" value="UniProtKB-SubCell"/>
</dbReference>
<dbReference type="GO" id="GO:0045275">
    <property type="term" value="C:respiratory chain complex III"/>
    <property type="evidence" value="ECO:0007669"/>
    <property type="project" value="InterPro"/>
</dbReference>
<dbReference type="GO" id="GO:0046872">
    <property type="term" value="F:metal ion binding"/>
    <property type="evidence" value="ECO:0007669"/>
    <property type="project" value="UniProtKB-KW"/>
</dbReference>
<dbReference type="GO" id="GO:0008121">
    <property type="term" value="F:ubiquinol-cytochrome-c reductase activity"/>
    <property type="evidence" value="ECO:0007669"/>
    <property type="project" value="InterPro"/>
</dbReference>
<dbReference type="GO" id="GO:0006122">
    <property type="term" value="P:mitochondrial electron transport, ubiquinol to cytochrome c"/>
    <property type="evidence" value="ECO:0007669"/>
    <property type="project" value="TreeGrafter"/>
</dbReference>
<dbReference type="CDD" id="cd00290">
    <property type="entry name" value="cytochrome_b_C"/>
    <property type="match status" value="1"/>
</dbReference>
<dbReference type="CDD" id="cd00284">
    <property type="entry name" value="Cytochrome_b_N"/>
    <property type="match status" value="1"/>
</dbReference>
<dbReference type="FunFam" id="1.20.810.10:FF:000002">
    <property type="entry name" value="Cytochrome b"/>
    <property type="match status" value="1"/>
</dbReference>
<dbReference type="Gene3D" id="1.20.810.10">
    <property type="entry name" value="Cytochrome Bc1 Complex, Chain C"/>
    <property type="match status" value="1"/>
</dbReference>
<dbReference type="InterPro" id="IPR005798">
    <property type="entry name" value="Cyt_b/b6_C"/>
</dbReference>
<dbReference type="InterPro" id="IPR036150">
    <property type="entry name" value="Cyt_b/b6_C_sf"/>
</dbReference>
<dbReference type="InterPro" id="IPR005797">
    <property type="entry name" value="Cyt_b/b6_N"/>
</dbReference>
<dbReference type="InterPro" id="IPR027387">
    <property type="entry name" value="Cytb/b6-like_sf"/>
</dbReference>
<dbReference type="InterPro" id="IPR030689">
    <property type="entry name" value="Cytochrome_b"/>
</dbReference>
<dbReference type="InterPro" id="IPR048260">
    <property type="entry name" value="Cytochrome_b_C_euk/bac"/>
</dbReference>
<dbReference type="InterPro" id="IPR048259">
    <property type="entry name" value="Cytochrome_b_N_euk/bac"/>
</dbReference>
<dbReference type="InterPro" id="IPR016174">
    <property type="entry name" value="Di-haem_cyt_TM"/>
</dbReference>
<dbReference type="PANTHER" id="PTHR19271">
    <property type="entry name" value="CYTOCHROME B"/>
    <property type="match status" value="1"/>
</dbReference>
<dbReference type="PANTHER" id="PTHR19271:SF16">
    <property type="entry name" value="CYTOCHROME B"/>
    <property type="match status" value="1"/>
</dbReference>
<dbReference type="Pfam" id="PF00032">
    <property type="entry name" value="Cytochrom_B_C"/>
    <property type="match status" value="1"/>
</dbReference>
<dbReference type="Pfam" id="PF00033">
    <property type="entry name" value="Cytochrome_B"/>
    <property type="match status" value="1"/>
</dbReference>
<dbReference type="PIRSF" id="PIRSF038885">
    <property type="entry name" value="COB"/>
    <property type="match status" value="1"/>
</dbReference>
<dbReference type="SUPFAM" id="SSF81648">
    <property type="entry name" value="a domain/subunit of cytochrome bc1 complex (Ubiquinol-cytochrome c reductase)"/>
    <property type="match status" value="1"/>
</dbReference>
<dbReference type="SUPFAM" id="SSF81342">
    <property type="entry name" value="Transmembrane di-heme cytochromes"/>
    <property type="match status" value="1"/>
</dbReference>
<dbReference type="PROSITE" id="PS51003">
    <property type="entry name" value="CYTB_CTER"/>
    <property type="match status" value="1"/>
</dbReference>
<dbReference type="PROSITE" id="PS51002">
    <property type="entry name" value="CYTB_NTER"/>
    <property type="match status" value="1"/>
</dbReference>
<organism>
    <name type="scientific">Chiroderma villosum</name>
    <name type="common">Hairy big-eyed bat</name>
    <dbReference type="NCBI Taxonomy" id="33546"/>
    <lineage>
        <taxon>Eukaryota</taxon>
        <taxon>Metazoa</taxon>
        <taxon>Chordata</taxon>
        <taxon>Craniata</taxon>
        <taxon>Vertebrata</taxon>
        <taxon>Euteleostomi</taxon>
        <taxon>Mammalia</taxon>
        <taxon>Eutheria</taxon>
        <taxon>Laurasiatheria</taxon>
        <taxon>Chiroptera</taxon>
        <taxon>Yangochiroptera</taxon>
        <taxon>Phyllostomidae</taxon>
        <taxon>Stenodermatinae</taxon>
        <taxon>Chiroderma</taxon>
    </lineage>
</organism>
<proteinExistence type="inferred from homology"/>